<reference key="1">
    <citation type="journal article" date="2005" name="Proc. Natl. Acad. Sci. U.S.A.">
        <title>Complete genome sequence of Vibrio fischeri: a symbiotic bacterium with pathogenic congeners.</title>
        <authorList>
            <person name="Ruby E.G."/>
            <person name="Urbanowski M."/>
            <person name="Campbell J."/>
            <person name="Dunn A."/>
            <person name="Faini M."/>
            <person name="Gunsalus R."/>
            <person name="Lostroh P."/>
            <person name="Lupp C."/>
            <person name="McCann J."/>
            <person name="Millikan D."/>
            <person name="Schaefer A."/>
            <person name="Stabb E."/>
            <person name="Stevens A."/>
            <person name="Visick K."/>
            <person name="Whistler C."/>
            <person name="Greenberg E.P."/>
        </authorList>
    </citation>
    <scope>NUCLEOTIDE SEQUENCE [LARGE SCALE GENOMIC DNA]</scope>
    <source>
        <strain>ATCC 700601 / ES114</strain>
    </source>
</reference>
<accession>Q5E8R9</accession>
<keyword id="KW-0963">Cytoplasm</keyword>
<keyword id="KW-0489">Methyltransferase</keyword>
<keyword id="KW-1185">Reference proteome</keyword>
<keyword id="KW-0698">rRNA processing</keyword>
<keyword id="KW-0949">S-adenosyl-L-methionine</keyword>
<keyword id="KW-0808">Transferase</keyword>
<name>RSMJ_ALIF1</name>
<dbReference type="EC" id="2.1.1.242" evidence="1"/>
<dbReference type="EMBL" id="CP000020">
    <property type="protein sequence ID" value="AAW84577.1"/>
    <property type="molecule type" value="Genomic_DNA"/>
</dbReference>
<dbReference type="RefSeq" id="WP_011260954.1">
    <property type="nucleotide sequence ID" value="NC_006840.2"/>
</dbReference>
<dbReference type="RefSeq" id="YP_203465.1">
    <property type="nucleotide sequence ID" value="NC_006840.2"/>
</dbReference>
<dbReference type="SMR" id="Q5E8R9"/>
<dbReference type="STRING" id="312309.VF_0082"/>
<dbReference type="EnsemblBacteria" id="AAW84577">
    <property type="protein sequence ID" value="AAW84577"/>
    <property type="gene ID" value="VF_0082"/>
</dbReference>
<dbReference type="GeneID" id="54162710"/>
<dbReference type="KEGG" id="vfi:VF_0082"/>
<dbReference type="PATRIC" id="fig|312309.11.peg.82"/>
<dbReference type="eggNOG" id="COG0742">
    <property type="taxonomic scope" value="Bacteria"/>
</dbReference>
<dbReference type="HOGENOM" id="CLU_076324_0_0_6"/>
<dbReference type="OrthoDB" id="3191794at2"/>
<dbReference type="Proteomes" id="UP000000537">
    <property type="component" value="Chromosome I"/>
</dbReference>
<dbReference type="GO" id="GO:0005737">
    <property type="term" value="C:cytoplasm"/>
    <property type="evidence" value="ECO:0007669"/>
    <property type="project" value="UniProtKB-SubCell"/>
</dbReference>
<dbReference type="GO" id="GO:0008990">
    <property type="term" value="F:rRNA (guanine-N2-)-methyltransferase activity"/>
    <property type="evidence" value="ECO:0007669"/>
    <property type="project" value="UniProtKB-UniRule"/>
</dbReference>
<dbReference type="Gene3D" id="3.40.50.150">
    <property type="entry name" value="Vaccinia Virus protein VP39"/>
    <property type="match status" value="1"/>
</dbReference>
<dbReference type="Gene3D" id="3.40.1630.10">
    <property type="entry name" value="YhiQ-like domain"/>
    <property type="match status" value="1"/>
</dbReference>
<dbReference type="HAMAP" id="MF_01523">
    <property type="entry name" value="16SrRNA_methyltr_J"/>
    <property type="match status" value="1"/>
</dbReference>
<dbReference type="InterPro" id="IPR007536">
    <property type="entry name" value="16SrRNA_methylTrfase_J"/>
</dbReference>
<dbReference type="InterPro" id="IPR029063">
    <property type="entry name" value="SAM-dependent_MTases_sf"/>
</dbReference>
<dbReference type="PANTHER" id="PTHR36112">
    <property type="entry name" value="RIBOSOMAL RNA SMALL SUBUNIT METHYLTRANSFERASE J"/>
    <property type="match status" value="1"/>
</dbReference>
<dbReference type="PANTHER" id="PTHR36112:SF1">
    <property type="entry name" value="RIBOSOMAL RNA SMALL SUBUNIT METHYLTRANSFERASE J"/>
    <property type="match status" value="1"/>
</dbReference>
<dbReference type="Pfam" id="PF04445">
    <property type="entry name" value="SAM_MT"/>
    <property type="match status" value="1"/>
</dbReference>
<dbReference type="SUPFAM" id="SSF53335">
    <property type="entry name" value="S-adenosyl-L-methionine-dependent methyltransferases"/>
    <property type="match status" value="1"/>
</dbReference>
<gene>
    <name evidence="1" type="primary">rsmJ</name>
    <name type="ordered locus">VF_0082</name>
</gene>
<sequence length="259" mass="28351">MQIALLSEDPNRQSELEAIATRWGLEHDEDNVFALVLTDKQLELRKRDEPKLGAIFVDLVSGAVAHRRKFGGGKGQSIAKAVGLNKGATPIVLDGTAGLGRDAFVLASLGCKVQMVERHPVVAALLDDGLARAKQDAEIGVWVAERMSLLHASSHDALEQLMAQDDFVQPDVVYLDPMYPHPVNKKKSALVKKEMRVFQSLVGADNDADALLAPALSMATKRVVVKRPDYAEWLDNQKPSMAIETKKNRFDVYVNAAMA</sequence>
<comment type="function">
    <text evidence="1">Specifically methylates the guanosine in position 1516 of 16S rRNA.</text>
</comment>
<comment type="catalytic activity">
    <reaction evidence="1">
        <text>guanosine(1516) in 16S rRNA + S-adenosyl-L-methionine = N(2)-methylguanosine(1516) in 16S rRNA + S-adenosyl-L-homocysteine + H(+)</text>
        <dbReference type="Rhea" id="RHEA:43220"/>
        <dbReference type="Rhea" id="RHEA-COMP:10412"/>
        <dbReference type="Rhea" id="RHEA-COMP:10413"/>
        <dbReference type="ChEBI" id="CHEBI:15378"/>
        <dbReference type="ChEBI" id="CHEBI:57856"/>
        <dbReference type="ChEBI" id="CHEBI:59789"/>
        <dbReference type="ChEBI" id="CHEBI:74269"/>
        <dbReference type="ChEBI" id="CHEBI:74481"/>
        <dbReference type="EC" id="2.1.1.242"/>
    </reaction>
</comment>
<comment type="subcellular location">
    <subcellularLocation>
        <location evidence="1">Cytoplasm</location>
    </subcellularLocation>
</comment>
<comment type="similarity">
    <text evidence="1">Belongs to the methyltransferase superfamily. RsmJ family.</text>
</comment>
<proteinExistence type="inferred from homology"/>
<feature type="chain" id="PRO_0000212095" description="Ribosomal RNA small subunit methyltransferase J">
    <location>
        <begin position="1"/>
        <end position="259"/>
    </location>
</feature>
<feature type="binding site" evidence="1">
    <location>
        <begin position="101"/>
        <end position="102"/>
    </location>
    <ligand>
        <name>S-adenosyl-L-methionine</name>
        <dbReference type="ChEBI" id="CHEBI:59789"/>
    </ligand>
</feature>
<feature type="binding site" evidence="1">
    <location>
        <begin position="117"/>
        <end position="118"/>
    </location>
    <ligand>
        <name>S-adenosyl-L-methionine</name>
        <dbReference type="ChEBI" id="CHEBI:59789"/>
    </ligand>
</feature>
<feature type="binding site" evidence="1">
    <location>
        <begin position="153"/>
        <end position="154"/>
    </location>
    <ligand>
        <name>S-adenosyl-L-methionine</name>
        <dbReference type="ChEBI" id="CHEBI:59789"/>
    </ligand>
</feature>
<feature type="binding site" evidence="1">
    <location>
        <position position="176"/>
    </location>
    <ligand>
        <name>S-adenosyl-L-methionine</name>
        <dbReference type="ChEBI" id="CHEBI:59789"/>
    </ligand>
</feature>
<evidence type="ECO:0000255" key="1">
    <source>
        <dbReference type="HAMAP-Rule" id="MF_01523"/>
    </source>
</evidence>
<protein>
    <recommendedName>
        <fullName evidence="1">Ribosomal RNA small subunit methyltransferase J</fullName>
        <ecNumber evidence="1">2.1.1.242</ecNumber>
    </recommendedName>
    <alternativeName>
        <fullName evidence="1">16S rRNA m2G1516 methyltransferase</fullName>
    </alternativeName>
    <alternativeName>
        <fullName evidence="1">rRNA (guanine-N(2)-)-methyltransferase</fullName>
    </alternativeName>
</protein>
<organism>
    <name type="scientific">Aliivibrio fischeri (strain ATCC 700601 / ES114)</name>
    <name type="common">Vibrio fischeri</name>
    <dbReference type="NCBI Taxonomy" id="312309"/>
    <lineage>
        <taxon>Bacteria</taxon>
        <taxon>Pseudomonadati</taxon>
        <taxon>Pseudomonadota</taxon>
        <taxon>Gammaproteobacteria</taxon>
        <taxon>Vibrionales</taxon>
        <taxon>Vibrionaceae</taxon>
        <taxon>Aliivibrio</taxon>
    </lineage>
</organism>